<organism>
    <name type="scientific">Bdellovibrio bacteriovorus (strain ATCC 15356 / DSM 50701 / NCIMB 9529 / HD100)</name>
    <dbReference type="NCBI Taxonomy" id="264462"/>
    <lineage>
        <taxon>Bacteria</taxon>
        <taxon>Pseudomonadati</taxon>
        <taxon>Bdellovibrionota</taxon>
        <taxon>Bdellovibrionia</taxon>
        <taxon>Bdellovibrionales</taxon>
        <taxon>Pseudobdellovibrionaceae</taxon>
        <taxon>Bdellovibrio</taxon>
    </lineage>
</organism>
<dbReference type="EC" id="3.6.1.27" evidence="1"/>
<dbReference type="EMBL" id="BX842653">
    <property type="protein sequence ID" value="CAE80485.1"/>
    <property type="molecule type" value="Genomic_DNA"/>
</dbReference>
<dbReference type="RefSeq" id="WP_011165088.1">
    <property type="nucleotide sequence ID" value="NC_005363.1"/>
</dbReference>
<dbReference type="SMR" id="P60936"/>
<dbReference type="STRING" id="264462.Bd2694"/>
<dbReference type="GeneID" id="93013584"/>
<dbReference type="KEGG" id="bba:Bd2694"/>
<dbReference type="eggNOG" id="COG1968">
    <property type="taxonomic scope" value="Bacteria"/>
</dbReference>
<dbReference type="HOGENOM" id="CLU_060296_2_0_7"/>
<dbReference type="Proteomes" id="UP000008080">
    <property type="component" value="Chromosome"/>
</dbReference>
<dbReference type="GO" id="GO:0005886">
    <property type="term" value="C:plasma membrane"/>
    <property type="evidence" value="ECO:0007669"/>
    <property type="project" value="UniProtKB-SubCell"/>
</dbReference>
<dbReference type="GO" id="GO:0050380">
    <property type="term" value="F:undecaprenyl-diphosphatase activity"/>
    <property type="evidence" value="ECO:0007669"/>
    <property type="project" value="UniProtKB-UniRule"/>
</dbReference>
<dbReference type="GO" id="GO:0071555">
    <property type="term" value="P:cell wall organization"/>
    <property type="evidence" value="ECO:0007669"/>
    <property type="project" value="UniProtKB-KW"/>
</dbReference>
<dbReference type="GO" id="GO:0009252">
    <property type="term" value="P:peptidoglycan biosynthetic process"/>
    <property type="evidence" value="ECO:0007669"/>
    <property type="project" value="UniProtKB-KW"/>
</dbReference>
<dbReference type="GO" id="GO:0008360">
    <property type="term" value="P:regulation of cell shape"/>
    <property type="evidence" value="ECO:0007669"/>
    <property type="project" value="UniProtKB-KW"/>
</dbReference>
<dbReference type="GO" id="GO:0046677">
    <property type="term" value="P:response to antibiotic"/>
    <property type="evidence" value="ECO:0007669"/>
    <property type="project" value="UniProtKB-UniRule"/>
</dbReference>
<dbReference type="HAMAP" id="MF_01006">
    <property type="entry name" value="Undec_diphosphatase"/>
    <property type="match status" value="1"/>
</dbReference>
<dbReference type="InterPro" id="IPR003824">
    <property type="entry name" value="UppP"/>
</dbReference>
<dbReference type="NCBIfam" id="NF001389">
    <property type="entry name" value="PRK00281.1-2"/>
    <property type="match status" value="1"/>
</dbReference>
<dbReference type="NCBIfam" id="NF001390">
    <property type="entry name" value="PRK00281.1-4"/>
    <property type="match status" value="1"/>
</dbReference>
<dbReference type="NCBIfam" id="TIGR00753">
    <property type="entry name" value="undec_PP_bacA"/>
    <property type="match status" value="1"/>
</dbReference>
<dbReference type="PANTHER" id="PTHR30622">
    <property type="entry name" value="UNDECAPRENYL-DIPHOSPHATASE"/>
    <property type="match status" value="1"/>
</dbReference>
<dbReference type="PANTHER" id="PTHR30622:SF3">
    <property type="entry name" value="UNDECAPRENYL-DIPHOSPHATASE"/>
    <property type="match status" value="1"/>
</dbReference>
<dbReference type="Pfam" id="PF02673">
    <property type="entry name" value="BacA"/>
    <property type="match status" value="1"/>
</dbReference>
<accession>P60936</accession>
<sequence length="263" mass="28996">MSYLHAIILGIVEGITEFLPISSTGHMIIASSMMGIEDSSFTKAFEVIIQFGAIMSVLVLYWKRFLPHWGFYRKLFVAFLPTAIIGFVVKDVVEHLMGSVQVVAWSLIIGGVILIWADKAFAHLTMMGRKTDDLTYKDSVKLGLFQAIAMIPGVSRSGATIMGGLTLGMNKKEAAEFSFFLAVPTMAAATLYKLLKIYKTIEPAQINLLLVGCAVAFVVAMIAIKFFIGIVSRYGFRGFGYYRIVLGLVILILLYTGHDLQMV</sequence>
<name>UPPP_BDEBA</name>
<protein>
    <recommendedName>
        <fullName evidence="1">Undecaprenyl-diphosphatase</fullName>
        <ecNumber evidence="1">3.6.1.27</ecNumber>
    </recommendedName>
    <alternativeName>
        <fullName evidence="1">Bacitracin resistance protein</fullName>
    </alternativeName>
    <alternativeName>
        <fullName evidence="1">Undecaprenyl pyrophosphate phosphatase</fullName>
    </alternativeName>
</protein>
<reference key="1">
    <citation type="journal article" date="2004" name="Science">
        <title>A predator unmasked: life cycle of Bdellovibrio bacteriovorus from a genomic perspective.</title>
        <authorList>
            <person name="Rendulic S."/>
            <person name="Jagtap P."/>
            <person name="Rosinus A."/>
            <person name="Eppinger M."/>
            <person name="Baar C."/>
            <person name="Lanz C."/>
            <person name="Keller H."/>
            <person name="Lambert C."/>
            <person name="Evans K.J."/>
            <person name="Goesmann A."/>
            <person name="Meyer F."/>
            <person name="Sockett R.E."/>
            <person name="Schuster S.C."/>
        </authorList>
    </citation>
    <scope>NUCLEOTIDE SEQUENCE [LARGE SCALE GENOMIC DNA]</scope>
    <source>
        <strain>ATCC 15356 / DSM 50701 / NCIMB 9529 / HD100</strain>
    </source>
</reference>
<comment type="function">
    <text evidence="1">Catalyzes the dephosphorylation of undecaprenyl diphosphate (UPP). Confers resistance to bacitracin.</text>
</comment>
<comment type="catalytic activity">
    <reaction evidence="1">
        <text>di-trans,octa-cis-undecaprenyl diphosphate + H2O = di-trans,octa-cis-undecaprenyl phosphate + phosphate + H(+)</text>
        <dbReference type="Rhea" id="RHEA:28094"/>
        <dbReference type="ChEBI" id="CHEBI:15377"/>
        <dbReference type="ChEBI" id="CHEBI:15378"/>
        <dbReference type="ChEBI" id="CHEBI:43474"/>
        <dbReference type="ChEBI" id="CHEBI:58405"/>
        <dbReference type="ChEBI" id="CHEBI:60392"/>
        <dbReference type="EC" id="3.6.1.27"/>
    </reaction>
</comment>
<comment type="subcellular location">
    <subcellularLocation>
        <location evidence="1">Cell inner membrane</location>
        <topology evidence="1">Multi-pass membrane protein</topology>
    </subcellularLocation>
</comment>
<comment type="miscellaneous">
    <text>Bacitracin is thought to be involved in the inhibition of peptidoglycan synthesis by sequestering undecaprenyl diphosphate, thereby reducing the pool of lipid carrier available.</text>
</comment>
<comment type="similarity">
    <text evidence="1">Belongs to the UppP family.</text>
</comment>
<feature type="chain" id="PRO_0000151111" description="Undecaprenyl-diphosphatase">
    <location>
        <begin position="1"/>
        <end position="263"/>
    </location>
</feature>
<feature type="transmembrane region" description="Helical" evidence="1">
    <location>
        <begin position="1"/>
        <end position="21"/>
    </location>
</feature>
<feature type="transmembrane region" description="Helical" evidence="1">
    <location>
        <begin position="41"/>
        <end position="61"/>
    </location>
</feature>
<feature type="transmembrane region" description="Helical" evidence="1">
    <location>
        <begin position="69"/>
        <end position="89"/>
    </location>
</feature>
<feature type="transmembrane region" description="Helical" evidence="1">
    <location>
        <begin position="96"/>
        <end position="116"/>
    </location>
</feature>
<feature type="transmembrane region" description="Helical" evidence="1">
    <location>
        <begin position="147"/>
        <end position="167"/>
    </location>
</feature>
<feature type="transmembrane region" description="Helical" evidence="1">
    <location>
        <begin position="177"/>
        <end position="197"/>
    </location>
</feature>
<feature type="transmembrane region" description="Helical" evidence="1">
    <location>
        <begin position="208"/>
        <end position="228"/>
    </location>
</feature>
<feature type="transmembrane region" description="Helical" evidence="1">
    <location>
        <begin position="238"/>
        <end position="258"/>
    </location>
</feature>
<evidence type="ECO:0000255" key="1">
    <source>
        <dbReference type="HAMAP-Rule" id="MF_01006"/>
    </source>
</evidence>
<proteinExistence type="inferred from homology"/>
<keyword id="KW-0046">Antibiotic resistance</keyword>
<keyword id="KW-0997">Cell inner membrane</keyword>
<keyword id="KW-1003">Cell membrane</keyword>
<keyword id="KW-0133">Cell shape</keyword>
<keyword id="KW-0961">Cell wall biogenesis/degradation</keyword>
<keyword id="KW-0378">Hydrolase</keyword>
<keyword id="KW-0472">Membrane</keyword>
<keyword id="KW-0573">Peptidoglycan synthesis</keyword>
<keyword id="KW-1185">Reference proteome</keyword>
<keyword id="KW-0812">Transmembrane</keyword>
<keyword id="KW-1133">Transmembrane helix</keyword>
<gene>
    <name evidence="1" type="primary">uppP</name>
    <name type="synonym">bacA</name>
    <name type="synonym">upk</name>
    <name type="ordered locus">Bd2694</name>
</gene>